<protein>
    <recommendedName>
        <fullName evidence="1">Threonine--tRNA ligase</fullName>
        <ecNumber evidence="1">6.1.1.3</ecNumber>
    </recommendedName>
    <alternativeName>
        <fullName evidence="1">Threonyl-tRNA synthetase</fullName>
        <shortName evidence="1">ThrRS</shortName>
    </alternativeName>
</protein>
<name>SYT_STRPJ</name>
<accession>B8ZM32</accession>
<comment type="function">
    <text evidence="1">Catalyzes the attachment of threonine to tRNA(Thr) in a two-step reaction: L-threonine is first activated by ATP to form Thr-AMP and then transferred to the acceptor end of tRNA(Thr). Also edits incorrectly charged L-seryl-tRNA(Thr).</text>
</comment>
<comment type="catalytic activity">
    <reaction evidence="1">
        <text>tRNA(Thr) + L-threonine + ATP = L-threonyl-tRNA(Thr) + AMP + diphosphate + H(+)</text>
        <dbReference type="Rhea" id="RHEA:24624"/>
        <dbReference type="Rhea" id="RHEA-COMP:9670"/>
        <dbReference type="Rhea" id="RHEA-COMP:9704"/>
        <dbReference type="ChEBI" id="CHEBI:15378"/>
        <dbReference type="ChEBI" id="CHEBI:30616"/>
        <dbReference type="ChEBI" id="CHEBI:33019"/>
        <dbReference type="ChEBI" id="CHEBI:57926"/>
        <dbReference type="ChEBI" id="CHEBI:78442"/>
        <dbReference type="ChEBI" id="CHEBI:78534"/>
        <dbReference type="ChEBI" id="CHEBI:456215"/>
        <dbReference type="EC" id="6.1.1.3"/>
    </reaction>
</comment>
<comment type="cofactor">
    <cofactor evidence="1">
        <name>Zn(2+)</name>
        <dbReference type="ChEBI" id="CHEBI:29105"/>
    </cofactor>
    <text evidence="1">Binds 1 zinc ion per subunit.</text>
</comment>
<comment type="subunit">
    <text evidence="1">Homodimer.</text>
</comment>
<comment type="subcellular location">
    <subcellularLocation>
        <location evidence="1">Cytoplasm</location>
    </subcellularLocation>
</comment>
<comment type="similarity">
    <text evidence="1">Belongs to the class-II aminoacyl-tRNA synthetase family.</text>
</comment>
<sequence length="647" mass="74669">MINITFPDGAVREFESGVTTFEIAQSISNSLAKKALAGKFNGKLIDTTRAITEDGSIEIVTPDHEDALPILRHSAAHLFAQAARRLFPDIHLGVGPAIEDGFYYDTDNTAGQISNEDLPRIEEEMQKIVKENFPSIREEVTKDEAREIFKNDPYKLELIEEHSEDEGGLTIYRQGEYVDLCRGPHVPSTGRIQIFHLLHVAGAYWRGNSDNAMMQRIYGTAWFEKKDLKNYLQMREEAKERDHRKLGKELDLFMISQEVGQGLPFWLPNGATIRRELERYIVNKELASGYQHVYTPPLASVELYKTSGHWDHYQEDMFPTMDMGDGEEFVLRPMNCPHHIQVFKHHVHSYRELPIRIAEIGMMHRYEKSGALTGLQRVREMSLNDGHLFVTPEQIQEEFQRALQLIIDVYEDFNLTDYRFRLSLRDPQDTHKYFDNDEMWENAQTMLRAALDEMGVDYFEAEGEAAFYGPKLDIQIKTALGKEETLSTIQLDFLLPERFDLKYIGADGEDHRPVMIHRGAISTMERFTAILIENYKGAFPTWLAPHQVTLIPVSNEKHVDYAWEVAKKLRDRGVRADVDERNEKMQFKIRASQTSKIPYQLIVGDKEMEDETVNVRRYGQKETQTVSVDNFVQAILADIANKSRVEK</sequence>
<evidence type="ECO:0000255" key="1">
    <source>
        <dbReference type="HAMAP-Rule" id="MF_00184"/>
    </source>
</evidence>
<evidence type="ECO:0000255" key="2">
    <source>
        <dbReference type="PROSITE-ProRule" id="PRU01228"/>
    </source>
</evidence>
<keyword id="KW-0030">Aminoacyl-tRNA synthetase</keyword>
<keyword id="KW-0067">ATP-binding</keyword>
<keyword id="KW-0963">Cytoplasm</keyword>
<keyword id="KW-0436">Ligase</keyword>
<keyword id="KW-0479">Metal-binding</keyword>
<keyword id="KW-0547">Nucleotide-binding</keyword>
<keyword id="KW-0648">Protein biosynthesis</keyword>
<keyword id="KW-0694">RNA-binding</keyword>
<keyword id="KW-0820">tRNA-binding</keyword>
<keyword id="KW-0862">Zinc</keyword>
<gene>
    <name evidence="1" type="primary">thrS</name>
    <name type="ordered locus">SPN23F16330</name>
</gene>
<organism>
    <name type="scientific">Streptococcus pneumoniae (strain ATCC 700669 / Spain 23F-1)</name>
    <dbReference type="NCBI Taxonomy" id="561276"/>
    <lineage>
        <taxon>Bacteria</taxon>
        <taxon>Bacillati</taxon>
        <taxon>Bacillota</taxon>
        <taxon>Bacilli</taxon>
        <taxon>Lactobacillales</taxon>
        <taxon>Streptococcaceae</taxon>
        <taxon>Streptococcus</taxon>
    </lineage>
</organism>
<dbReference type="EC" id="6.1.1.3" evidence="1"/>
<dbReference type="EMBL" id="FM211187">
    <property type="protein sequence ID" value="CAR69409.1"/>
    <property type="molecule type" value="Genomic_DNA"/>
</dbReference>
<dbReference type="RefSeq" id="WP_000608357.1">
    <property type="nucleotide sequence ID" value="NC_011900.1"/>
</dbReference>
<dbReference type="SMR" id="B8ZM32"/>
<dbReference type="KEGG" id="sne:SPN23F16330"/>
<dbReference type="HOGENOM" id="CLU_008554_3_2_9"/>
<dbReference type="GO" id="GO:0005737">
    <property type="term" value="C:cytoplasm"/>
    <property type="evidence" value="ECO:0007669"/>
    <property type="project" value="UniProtKB-SubCell"/>
</dbReference>
<dbReference type="GO" id="GO:0005524">
    <property type="term" value="F:ATP binding"/>
    <property type="evidence" value="ECO:0007669"/>
    <property type="project" value="UniProtKB-UniRule"/>
</dbReference>
<dbReference type="GO" id="GO:0140096">
    <property type="term" value="F:catalytic activity, acting on a protein"/>
    <property type="evidence" value="ECO:0007669"/>
    <property type="project" value="UniProtKB-ARBA"/>
</dbReference>
<dbReference type="GO" id="GO:0046872">
    <property type="term" value="F:metal ion binding"/>
    <property type="evidence" value="ECO:0007669"/>
    <property type="project" value="UniProtKB-KW"/>
</dbReference>
<dbReference type="GO" id="GO:0004829">
    <property type="term" value="F:threonine-tRNA ligase activity"/>
    <property type="evidence" value="ECO:0007669"/>
    <property type="project" value="UniProtKB-UniRule"/>
</dbReference>
<dbReference type="GO" id="GO:0016740">
    <property type="term" value="F:transferase activity"/>
    <property type="evidence" value="ECO:0007669"/>
    <property type="project" value="UniProtKB-ARBA"/>
</dbReference>
<dbReference type="GO" id="GO:0000049">
    <property type="term" value="F:tRNA binding"/>
    <property type="evidence" value="ECO:0007669"/>
    <property type="project" value="UniProtKB-KW"/>
</dbReference>
<dbReference type="GO" id="GO:0006435">
    <property type="term" value="P:threonyl-tRNA aminoacylation"/>
    <property type="evidence" value="ECO:0007669"/>
    <property type="project" value="UniProtKB-UniRule"/>
</dbReference>
<dbReference type="CDD" id="cd01667">
    <property type="entry name" value="TGS_ThrRS"/>
    <property type="match status" value="1"/>
</dbReference>
<dbReference type="CDD" id="cd00860">
    <property type="entry name" value="ThrRS_anticodon"/>
    <property type="match status" value="1"/>
</dbReference>
<dbReference type="CDD" id="cd00771">
    <property type="entry name" value="ThrRS_core"/>
    <property type="match status" value="1"/>
</dbReference>
<dbReference type="FunFam" id="3.10.20.30:FF:000005">
    <property type="entry name" value="Threonine--tRNA ligase"/>
    <property type="match status" value="1"/>
</dbReference>
<dbReference type="FunFam" id="3.30.54.20:FF:000002">
    <property type="entry name" value="Threonine--tRNA ligase"/>
    <property type="match status" value="1"/>
</dbReference>
<dbReference type="FunFam" id="3.30.930.10:FF:000002">
    <property type="entry name" value="Threonine--tRNA ligase"/>
    <property type="match status" value="1"/>
</dbReference>
<dbReference type="FunFam" id="3.40.50.800:FF:000001">
    <property type="entry name" value="Threonine--tRNA ligase"/>
    <property type="match status" value="1"/>
</dbReference>
<dbReference type="FunFam" id="3.30.980.10:FF:000005">
    <property type="entry name" value="Threonyl-tRNA synthetase, mitochondrial"/>
    <property type="match status" value="1"/>
</dbReference>
<dbReference type="Gene3D" id="3.10.20.30">
    <property type="match status" value="1"/>
</dbReference>
<dbReference type="Gene3D" id="3.30.54.20">
    <property type="match status" value="1"/>
</dbReference>
<dbReference type="Gene3D" id="3.40.50.800">
    <property type="entry name" value="Anticodon-binding domain"/>
    <property type="match status" value="1"/>
</dbReference>
<dbReference type="Gene3D" id="3.30.930.10">
    <property type="entry name" value="Bira Bifunctional Protein, Domain 2"/>
    <property type="match status" value="1"/>
</dbReference>
<dbReference type="Gene3D" id="3.30.980.10">
    <property type="entry name" value="Threonyl-trna Synthetase, Chain A, domain 2"/>
    <property type="match status" value="1"/>
</dbReference>
<dbReference type="HAMAP" id="MF_00184">
    <property type="entry name" value="Thr_tRNA_synth"/>
    <property type="match status" value="1"/>
</dbReference>
<dbReference type="InterPro" id="IPR002314">
    <property type="entry name" value="aa-tRNA-synt_IIb"/>
</dbReference>
<dbReference type="InterPro" id="IPR006195">
    <property type="entry name" value="aa-tRNA-synth_II"/>
</dbReference>
<dbReference type="InterPro" id="IPR045864">
    <property type="entry name" value="aa-tRNA-synth_II/BPL/LPL"/>
</dbReference>
<dbReference type="InterPro" id="IPR004154">
    <property type="entry name" value="Anticodon-bd"/>
</dbReference>
<dbReference type="InterPro" id="IPR036621">
    <property type="entry name" value="Anticodon-bd_dom_sf"/>
</dbReference>
<dbReference type="InterPro" id="IPR012675">
    <property type="entry name" value="Beta-grasp_dom_sf"/>
</dbReference>
<dbReference type="InterPro" id="IPR004095">
    <property type="entry name" value="TGS"/>
</dbReference>
<dbReference type="InterPro" id="IPR012676">
    <property type="entry name" value="TGS-like"/>
</dbReference>
<dbReference type="InterPro" id="IPR002320">
    <property type="entry name" value="Thr-tRNA-ligase_IIa"/>
</dbReference>
<dbReference type="InterPro" id="IPR018163">
    <property type="entry name" value="Thr/Ala-tRNA-synth_IIc_edit"/>
</dbReference>
<dbReference type="InterPro" id="IPR047246">
    <property type="entry name" value="ThrRS_anticodon"/>
</dbReference>
<dbReference type="InterPro" id="IPR033728">
    <property type="entry name" value="ThrRS_core"/>
</dbReference>
<dbReference type="InterPro" id="IPR012947">
    <property type="entry name" value="tRNA_SAD"/>
</dbReference>
<dbReference type="NCBIfam" id="TIGR00418">
    <property type="entry name" value="thrS"/>
    <property type="match status" value="1"/>
</dbReference>
<dbReference type="PANTHER" id="PTHR11451:SF56">
    <property type="entry name" value="THREONINE--TRNA LIGASE 1"/>
    <property type="match status" value="1"/>
</dbReference>
<dbReference type="PANTHER" id="PTHR11451">
    <property type="entry name" value="THREONINE-TRNA LIGASE"/>
    <property type="match status" value="1"/>
</dbReference>
<dbReference type="Pfam" id="PF03129">
    <property type="entry name" value="HGTP_anticodon"/>
    <property type="match status" value="1"/>
</dbReference>
<dbReference type="Pfam" id="PF02824">
    <property type="entry name" value="TGS"/>
    <property type="match status" value="1"/>
</dbReference>
<dbReference type="Pfam" id="PF00587">
    <property type="entry name" value="tRNA-synt_2b"/>
    <property type="match status" value="1"/>
</dbReference>
<dbReference type="Pfam" id="PF07973">
    <property type="entry name" value="tRNA_SAD"/>
    <property type="match status" value="1"/>
</dbReference>
<dbReference type="PRINTS" id="PR01047">
    <property type="entry name" value="TRNASYNTHTHR"/>
</dbReference>
<dbReference type="SMART" id="SM00863">
    <property type="entry name" value="tRNA_SAD"/>
    <property type="match status" value="1"/>
</dbReference>
<dbReference type="SUPFAM" id="SSF52954">
    <property type="entry name" value="Class II aaRS ABD-related"/>
    <property type="match status" value="1"/>
</dbReference>
<dbReference type="SUPFAM" id="SSF55681">
    <property type="entry name" value="Class II aaRS and biotin synthetases"/>
    <property type="match status" value="1"/>
</dbReference>
<dbReference type="SUPFAM" id="SSF81271">
    <property type="entry name" value="TGS-like"/>
    <property type="match status" value="1"/>
</dbReference>
<dbReference type="SUPFAM" id="SSF55186">
    <property type="entry name" value="ThrRS/AlaRS common domain"/>
    <property type="match status" value="1"/>
</dbReference>
<dbReference type="PROSITE" id="PS50862">
    <property type="entry name" value="AA_TRNA_LIGASE_II"/>
    <property type="match status" value="1"/>
</dbReference>
<dbReference type="PROSITE" id="PS51880">
    <property type="entry name" value="TGS"/>
    <property type="match status" value="1"/>
</dbReference>
<proteinExistence type="inferred from homology"/>
<feature type="chain" id="PRO_1000199570" description="Threonine--tRNA ligase">
    <location>
        <begin position="1"/>
        <end position="647"/>
    </location>
</feature>
<feature type="domain" description="TGS" evidence="2">
    <location>
        <begin position="1"/>
        <end position="61"/>
    </location>
</feature>
<feature type="region of interest" description="Catalytic" evidence="1">
    <location>
        <begin position="242"/>
        <end position="540"/>
    </location>
</feature>
<feature type="binding site" evidence="1">
    <location>
        <position position="336"/>
    </location>
    <ligand>
        <name>Zn(2+)</name>
        <dbReference type="ChEBI" id="CHEBI:29105"/>
    </ligand>
</feature>
<feature type="binding site" evidence="1">
    <location>
        <position position="387"/>
    </location>
    <ligand>
        <name>Zn(2+)</name>
        <dbReference type="ChEBI" id="CHEBI:29105"/>
    </ligand>
</feature>
<feature type="binding site" evidence="1">
    <location>
        <position position="517"/>
    </location>
    <ligand>
        <name>Zn(2+)</name>
        <dbReference type="ChEBI" id="CHEBI:29105"/>
    </ligand>
</feature>
<reference key="1">
    <citation type="journal article" date="2009" name="J. Bacteriol.">
        <title>Role of conjugative elements in the evolution of the multidrug-resistant pandemic clone Streptococcus pneumoniae Spain23F ST81.</title>
        <authorList>
            <person name="Croucher N.J."/>
            <person name="Walker D."/>
            <person name="Romero P."/>
            <person name="Lennard N."/>
            <person name="Paterson G.K."/>
            <person name="Bason N.C."/>
            <person name="Mitchell A.M."/>
            <person name="Quail M.A."/>
            <person name="Andrew P.W."/>
            <person name="Parkhill J."/>
            <person name="Bentley S.D."/>
            <person name="Mitchell T.J."/>
        </authorList>
    </citation>
    <scope>NUCLEOTIDE SEQUENCE [LARGE SCALE GENOMIC DNA]</scope>
    <source>
        <strain>ATCC 700669 / Spain 23F-1</strain>
    </source>
</reference>